<dbReference type="EC" id="2.3.1.-" evidence="2"/>
<dbReference type="EMBL" id="AAFI02000004">
    <property type="protein sequence ID" value="EAL73023.1"/>
    <property type="molecule type" value="Genomic_DNA"/>
</dbReference>
<dbReference type="RefSeq" id="XP_647027.1">
    <property type="nucleotide sequence ID" value="XM_641935.1"/>
</dbReference>
<dbReference type="SMR" id="Q55EJ3"/>
<dbReference type="FunCoup" id="Q55EJ3">
    <property type="interactions" value="856"/>
</dbReference>
<dbReference type="STRING" id="44689.Q55EJ3"/>
<dbReference type="GlyGen" id="Q55EJ3">
    <property type="glycosylation" value="1 site"/>
</dbReference>
<dbReference type="PaxDb" id="44689-DDB0234062"/>
<dbReference type="EnsemblProtists" id="EAL73023">
    <property type="protein sequence ID" value="EAL73023"/>
    <property type="gene ID" value="DDB_G0268868"/>
</dbReference>
<dbReference type="GeneID" id="8616722"/>
<dbReference type="KEGG" id="ddi:DDB_G0268868"/>
<dbReference type="dictyBase" id="DDB_G0268868">
    <property type="gene designation" value="nat10"/>
</dbReference>
<dbReference type="VEuPathDB" id="AmoebaDB:DDB_G0268868"/>
<dbReference type="eggNOG" id="KOG2036">
    <property type="taxonomic scope" value="Eukaryota"/>
</dbReference>
<dbReference type="HOGENOM" id="CLU_004652_0_0_1"/>
<dbReference type="InParanoid" id="Q55EJ3"/>
<dbReference type="OMA" id="HLHYIMS"/>
<dbReference type="PhylomeDB" id="Q55EJ3"/>
<dbReference type="PRO" id="PR:Q55EJ3"/>
<dbReference type="Proteomes" id="UP000002195">
    <property type="component" value="Chromosome 1"/>
</dbReference>
<dbReference type="GO" id="GO:0005730">
    <property type="term" value="C:nucleolus"/>
    <property type="evidence" value="ECO:0000318"/>
    <property type="project" value="GO_Central"/>
</dbReference>
<dbReference type="GO" id="GO:0032040">
    <property type="term" value="C:small-subunit processome"/>
    <property type="evidence" value="ECO:0000250"/>
    <property type="project" value="UniProtKB"/>
</dbReference>
<dbReference type="GO" id="GO:1990883">
    <property type="term" value="F:18S rRNA cytidine N-acetyltransferase activity"/>
    <property type="evidence" value="ECO:0000318"/>
    <property type="project" value="GO_Central"/>
</dbReference>
<dbReference type="GO" id="GO:0005524">
    <property type="term" value="F:ATP binding"/>
    <property type="evidence" value="ECO:0007669"/>
    <property type="project" value="UniProtKB-UniRule"/>
</dbReference>
<dbReference type="GO" id="GO:0000049">
    <property type="term" value="F:tRNA binding"/>
    <property type="evidence" value="ECO:0000318"/>
    <property type="project" value="GO_Central"/>
</dbReference>
<dbReference type="GO" id="GO:0051392">
    <property type="term" value="F:tRNA N4-acetyltransferase activity"/>
    <property type="evidence" value="ECO:0000318"/>
    <property type="project" value="GO_Central"/>
</dbReference>
<dbReference type="GO" id="GO:0042274">
    <property type="term" value="P:ribosomal small subunit biogenesis"/>
    <property type="evidence" value="ECO:0000250"/>
    <property type="project" value="UniProtKB"/>
</dbReference>
<dbReference type="GO" id="GO:1904812">
    <property type="term" value="P:rRNA acetylation involved in maturation of SSU-rRNA"/>
    <property type="evidence" value="ECO:0000318"/>
    <property type="project" value="GO_Central"/>
</dbReference>
<dbReference type="GO" id="GO:0051391">
    <property type="term" value="P:tRNA acetylation"/>
    <property type="evidence" value="ECO:0000318"/>
    <property type="project" value="GO_Central"/>
</dbReference>
<dbReference type="GO" id="GO:0002101">
    <property type="term" value="P:tRNA wobble cytosine modification"/>
    <property type="evidence" value="ECO:0000318"/>
    <property type="project" value="GO_Central"/>
</dbReference>
<dbReference type="CDD" id="cd04301">
    <property type="entry name" value="NAT_SF"/>
    <property type="match status" value="1"/>
</dbReference>
<dbReference type="FunFam" id="3.40.50.11040:FF:000002">
    <property type="entry name" value="RNA cytidine acetyltransferase"/>
    <property type="match status" value="1"/>
</dbReference>
<dbReference type="FunFam" id="3.40.50.300:FF:002218">
    <property type="entry name" value="tRNA(Met) cytidine acetyltransferase TmcA"/>
    <property type="match status" value="1"/>
</dbReference>
<dbReference type="Gene3D" id="3.40.50.11040">
    <property type="match status" value="1"/>
</dbReference>
<dbReference type="Gene3D" id="3.40.630.30">
    <property type="match status" value="1"/>
</dbReference>
<dbReference type="Gene3D" id="3.40.50.300">
    <property type="entry name" value="P-loop containing nucleotide triphosphate hydrolases"/>
    <property type="match status" value="1"/>
</dbReference>
<dbReference type="HAMAP" id="MF_03211">
    <property type="entry name" value="RNA_acetyltr_Nat10"/>
    <property type="match status" value="1"/>
</dbReference>
<dbReference type="InterPro" id="IPR016181">
    <property type="entry name" value="Acyl_CoA_acyltransferase"/>
</dbReference>
<dbReference type="InterPro" id="IPR000182">
    <property type="entry name" value="GNAT_dom"/>
</dbReference>
<dbReference type="InterPro" id="IPR033688">
    <property type="entry name" value="NAT10"/>
</dbReference>
<dbReference type="InterPro" id="IPR007807">
    <property type="entry name" value="NAT10/TcmA_helicase"/>
</dbReference>
<dbReference type="InterPro" id="IPR027417">
    <property type="entry name" value="P-loop_NTPase"/>
</dbReference>
<dbReference type="InterPro" id="IPR032672">
    <property type="entry name" value="TmcA/NAT10/Kre33"/>
</dbReference>
<dbReference type="InterPro" id="IPR013562">
    <property type="entry name" value="TmcA_N"/>
</dbReference>
<dbReference type="InterPro" id="IPR027992">
    <property type="entry name" value="tRNA_bind_dom"/>
</dbReference>
<dbReference type="PANTHER" id="PTHR10925">
    <property type="entry name" value="N-ACETYLTRANSFERASE 10"/>
    <property type="match status" value="1"/>
</dbReference>
<dbReference type="PANTHER" id="PTHR10925:SF5">
    <property type="entry name" value="RNA CYTIDINE ACETYLTRANSFERASE"/>
    <property type="match status" value="1"/>
</dbReference>
<dbReference type="Pfam" id="PF13718">
    <property type="entry name" value="GNAT_acetyltr_2"/>
    <property type="match status" value="1"/>
</dbReference>
<dbReference type="Pfam" id="PF05127">
    <property type="entry name" value="NAT10_TcmA_helicase"/>
    <property type="match status" value="1"/>
</dbReference>
<dbReference type="Pfam" id="PF08351">
    <property type="entry name" value="TmcA_N"/>
    <property type="match status" value="1"/>
</dbReference>
<dbReference type="Pfam" id="PF13725">
    <property type="entry name" value="tRNA_bind_2"/>
    <property type="match status" value="1"/>
</dbReference>
<dbReference type="SUPFAM" id="SSF55729">
    <property type="entry name" value="Acyl-CoA N-acyltransferases (Nat)"/>
    <property type="match status" value="1"/>
</dbReference>
<evidence type="ECO:0000250" key="1">
    <source>
        <dbReference type="UniProtKB" id="Q9H0A0"/>
    </source>
</evidence>
<evidence type="ECO:0000255" key="2">
    <source>
        <dbReference type="HAMAP-Rule" id="MF_03211"/>
    </source>
</evidence>
<evidence type="ECO:0000256" key="3">
    <source>
        <dbReference type="SAM" id="MobiDB-lite"/>
    </source>
</evidence>
<organism>
    <name type="scientific">Dictyostelium discoideum</name>
    <name type="common">Social amoeba</name>
    <dbReference type="NCBI Taxonomy" id="44689"/>
    <lineage>
        <taxon>Eukaryota</taxon>
        <taxon>Amoebozoa</taxon>
        <taxon>Evosea</taxon>
        <taxon>Eumycetozoa</taxon>
        <taxon>Dictyostelia</taxon>
        <taxon>Dictyosteliales</taxon>
        <taxon>Dictyosteliaceae</taxon>
        <taxon>Dictyostelium</taxon>
    </lineage>
</organism>
<accession>Q55EJ3</accession>
<gene>
    <name type="primary">nat10</name>
    <name type="ORF">DDB_G0268868</name>
</gene>
<feature type="chain" id="PRO_0000327396" description="RNA cytidine acetyltransferase">
    <location>
        <begin position="1"/>
        <end position="1057"/>
    </location>
</feature>
<feature type="domain" description="N-acetyltransferase" evidence="2">
    <location>
        <begin position="549"/>
        <end position="682"/>
    </location>
</feature>
<feature type="region of interest" description="Disordered" evidence="3">
    <location>
        <begin position="654"/>
        <end position="675"/>
    </location>
</feature>
<feature type="region of interest" description="Disordered" evidence="3">
    <location>
        <begin position="1001"/>
        <end position="1057"/>
    </location>
</feature>
<feature type="compositionally biased region" description="Acidic residues" evidence="3">
    <location>
        <begin position="654"/>
        <end position="665"/>
    </location>
</feature>
<feature type="compositionally biased region" description="Basic and acidic residues" evidence="3">
    <location>
        <begin position="1018"/>
        <end position="1033"/>
    </location>
</feature>
<feature type="compositionally biased region" description="Low complexity" evidence="3">
    <location>
        <begin position="1038"/>
        <end position="1057"/>
    </location>
</feature>
<feature type="binding site" evidence="2">
    <location>
        <begin position="284"/>
        <end position="293"/>
    </location>
    <ligand>
        <name>ATP</name>
        <dbReference type="ChEBI" id="CHEBI:30616"/>
    </ligand>
</feature>
<feature type="binding site" evidence="2">
    <location>
        <position position="461"/>
    </location>
    <ligand>
        <name>ATP</name>
        <dbReference type="ChEBI" id="CHEBI:30616"/>
    </ligand>
</feature>
<feature type="binding site" evidence="2">
    <location>
        <begin position="621"/>
        <end position="623"/>
    </location>
    <ligand>
        <name>acetyl-CoA</name>
        <dbReference type="ChEBI" id="CHEBI:57288"/>
    </ligand>
</feature>
<feature type="binding site" evidence="2">
    <location>
        <begin position="628"/>
        <end position="634"/>
    </location>
    <ligand>
        <name>acetyl-CoA</name>
        <dbReference type="ChEBI" id="CHEBI:57288"/>
    </ligand>
</feature>
<feature type="binding site" evidence="2">
    <location>
        <position position="730"/>
    </location>
    <ligand>
        <name>acetyl-CoA</name>
        <dbReference type="ChEBI" id="CHEBI:57288"/>
    </ligand>
</feature>
<keyword id="KW-0012">Acyltransferase</keyword>
<keyword id="KW-0067">ATP-binding</keyword>
<keyword id="KW-0547">Nucleotide-binding</keyword>
<keyword id="KW-0539">Nucleus</keyword>
<keyword id="KW-1185">Reference proteome</keyword>
<keyword id="KW-0698">rRNA processing</keyword>
<keyword id="KW-0808">Transferase</keyword>
<keyword id="KW-0819">tRNA processing</keyword>
<comment type="function">
    <text evidence="1 2">RNA cytidine acetyltransferase with specificity toward both 18S rRNA and tRNAs. Catalyzes the formation of N(4)-acetylcytidine (ac4C) in 18S rRNA. Required for early nucleolar cleavages of precursor rRNA at sites A0, A1 and A2 during 18S rRNA synthesis. Catalyzes the formation of ac4C in serine and leucine tRNAs. Requires a tRNA-binding adapter protein for full tRNA acetyltransferase activity but not for 18S rRNA acetylation. Part of the small subunit (SSU) processome, first precursor of the small eukaryotic ribosomal subunit. During the assembly of the SSU processome in the nucleolus, many ribosome biogenesis factors, an RNA chaperone and ribosomal proteins associate with the nascent pre-rRNA and work in concert to generate RNA folding, modifications, rearrangements and cleavage as well as targeted degradation of pre-ribosomal RNA by the RNA exosome (By similarity).</text>
</comment>
<comment type="catalytic activity">
    <reaction evidence="2">
        <text>a cytidine in 18S rRNA + acetyl-CoA + ATP + H2O = an N(4)-acetylcytidine in 18S rRNA + ADP + phosphate + CoA + H(+)</text>
        <dbReference type="Rhea" id="RHEA:51424"/>
        <dbReference type="Rhea" id="RHEA-COMP:13575"/>
        <dbReference type="Rhea" id="RHEA-COMP:13576"/>
        <dbReference type="ChEBI" id="CHEBI:15377"/>
        <dbReference type="ChEBI" id="CHEBI:15378"/>
        <dbReference type="ChEBI" id="CHEBI:30616"/>
        <dbReference type="ChEBI" id="CHEBI:43474"/>
        <dbReference type="ChEBI" id="CHEBI:57287"/>
        <dbReference type="ChEBI" id="CHEBI:57288"/>
        <dbReference type="ChEBI" id="CHEBI:74900"/>
        <dbReference type="ChEBI" id="CHEBI:82748"/>
        <dbReference type="ChEBI" id="CHEBI:456216"/>
    </reaction>
</comment>
<comment type="catalytic activity">
    <reaction evidence="2">
        <text>a cytidine in tRNA + acetyl-CoA + ATP + H2O = an N(4)-acetylcytidine in tRNA + ADP + phosphate + CoA + H(+)</text>
        <dbReference type="Rhea" id="RHEA:53876"/>
        <dbReference type="Rhea" id="RHEA-COMP:13670"/>
        <dbReference type="Rhea" id="RHEA-COMP:13671"/>
        <dbReference type="ChEBI" id="CHEBI:15377"/>
        <dbReference type="ChEBI" id="CHEBI:15378"/>
        <dbReference type="ChEBI" id="CHEBI:30616"/>
        <dbReference type="ChEBI" id="CHEBI:43474"/>
        <dbReference type="ChEBI" id="CHEBI:57287"/>
        <dbReference type="ChEBI" id="CHEBI:57288"/>
        <dbReference type="ChEBI" id="CHEBI:74900"/>
        <dbReference type="ChEBI" id="CHEBI:82748"/>
        <dbReference type="ChEBI" id="CHEBI:456216"/>
    </reaction>
</comment>
<comment type="subunit">
    <text evidence="1">Part of the small subunit (SSU) processome, composed of more than 70 proteins and the RNA chaperone small nucleolar RNA (snoRNA) U3.</text>
</comment>
<comment type="subcellular location">
    <subcellularLocation>
        <location evidence="2">Nucleus</location>
        <location evidence="2">Nucleolus</location>
    </subcellularLocation>
</comment>
<comment type="similarity">
    <text evidence="2">Belongs to the RNA cytidine acetyltransferase family. NAT10 subfamily.</text>
</comment>
<sequence>MVRKKVDTRIRTLIENGVATNHRSFFVIVGDNGKDQVPNLHYILSKSIVKARPSVLWCYKEDLGFSKHKKKKMKLKEKSKSSGIDSVNQEDPFDVFISTTNIRYSYYSESHKILGNTFGMLVLQDFEAITPNLLARTIETVEGGGLIVLLLKTMDSLKQLYTMTMDVHTRFRSENSKGEVVCRFNERFLLSLGKSEQCLVMDDELNILPISSQSRSIEAKQQILETPEQVELREFKQQVKDTDIAGALIENTKTMDQATALLTFIDSISEKTLRSTVTLTAGRGRGKSAALGLAISAAVAFGYSNIFVSSPTPENLNTLFQFVFKGFDSMEYVEHVDYELVKSTNPEFHDAIIRVNIFRSHRQTIQYIQPQDYQKLGQAELVVIDEAAAIPLPLVKNLLGPYLVFMSSTINGYEGTGRSLSLKLIKQLREQSTVVSNSSNKALNSITGRMLREIELNEPIRYSARDPIERWLNELLCLDSTIAKSSPTGCPHPSACQLYYVNRDTLFSYHKASEAFLQKMVGLFVSSHYKNSPNDLLLMSDAPDHHLFVLLGPIDENNTTGLPEILCAVQVSLEGEIAKESILNSIKRGYQASGDLIPWTLTQQYQDEDFPRLSGVRIVRIATHPDYQKMGYGSKALELLTQYYQGEITNLDEVNQEEEEEDEEKVDQNKGSSKISTVKKDNASLLTEVIRPKSNIPPLLFKLSERKPEKLHYMGVSYGLTQQLYQFWSKSKYLPVYLRLTSNDITGEHTCIMLRELNNEQNNTICKDGWLQSFHQDFKKRFINLLGYEFRNFNSSIALNILYEKKVNNTVAVASSTTKNELTQNEMELLFSSYDLKRLESYSNNIVDYHVVIDLLPSLSKLYFTNKLKIEDISLIQSAILLALGLQHKTVDNLIGELNLASNQVLSLFNQTMRKINTELKQKQEKFIQDSMPKLSIVAPRTGQFKSFKGDIKETDMIPLAEDMESELEKGAEEVVNKLKHQLENDSSLSKYLVKGNDEDWSKALKPGSIPNSITIKRKSDENEETDKKENNKKSKTKNNNNNNNNNKKVNNQKSKK</sequence>
<proteinExistence type="inferred from homology"/>
<name>NAT10_DICDI</name>
<protein>
    <recommendedName>
        <fullName evidence="2">RNA cytidine acetyltransferase</fullName>
        <ecNumber evidence="2">2.3.1.-</ecNumber>
    </recommendedName>
    <alternativeName>
        <fullName evidence="2">18S rRNA cytosine acetyltransferase</fullName>
    </alternativeName>
</protein>
<reference key="1">
    <citation type="journal article" date="2005" name="Nature">
        <title>The genome of the social amoeba Dictyostelium discoideum.</title>
        <authorList>
            <person name="Eichinger L."/>
            <person name="Pachebat J.A."/>
            <person name="Gloeckner G."/>
            <person name="Rajandream M.A."/>
            <person name="Sucgang R."/>
            <person name="Berriman M."/>
            <person name="Song J."/>
            <person name="Olsen R."/>
            <person name="Szafranski K."/>
            <person name="Xu Q."/>
            <person name="Tunggal B."/>
            <person name="Kummerfeld S."/>
            <person name="Madera M."/>
            <person name="Konfortov B.A."/>
            <person name="Rivero F."/>
            <person name="Bankier A.T."/>
            <person name="Lehmann R."/>
            <person name="Hamlin N."/>
            <person name="Davies R."/>
            <person name="Gaudet P."/>
            <person name="Fey P."/>
            <person name="Pilcher K."/>
            <person name="Chen G."/>
            <person name="Saunders D."/>
            <person name="Sodergren E.J."/>
            <person name="Davis P."/>
            <person name="Kerhornou A."/>
            <person name="Nie X."/>
            <person name="Hall N."/>
            <person name="Anjard C."/>
            <person name="Hemphill L."/>
            <person name="Bason N."/>
            <person name="Farbrother P."/>
            <person name="Desany B."/>
            <person name="Just E."/>
            <person name="Morio T."/>
            <person name="Rost R."/>
            <person name="Churcher C.M."/>
            <person name="Cooper J."/>
            <person name="Haydock S."/>
            <person name="van Driessche N."/>
            <person name="Cronin A."/>
            <person name="Goodhead I."/>
            <person name="Muzny D.M."/>
            <person name="Mourier T."/>
            <person name="Pain A."/>
            <person name="Lu M."/>
            <person name="Harper D."/>
            <person name="Lindsay R."/>
            <person name="Hauser H."/>
            <person name="James K.D."/>
            <person name="Quiles M."/>
            <person name="Madan Babu M."/>
            <person name="Saito T."/>
            <person name="Buchrieser C."/>
            <person name="Wardroper A."/>
            <person name="Felder M."/>
            <person name="Thangavelu M."/>
            <person name="Johnson D."/>
            <person name="Knights A."/>
            <person name="Loulseged H."/>
            <person name="Mungall K.L."/>
            <person name="Oliver K."/>
            <person name="Price C."/>
            <person name="Quail M.A."/>
            <person name="Urushihara H."/>
            <person name="Hernandez J."/>
            <person name="Rabbinowitsch E."/>
            <person name="Steffen D."/>
            <person name="Sanders M."/>
            <person name="Ma J."/>
            <person name="Kohara Y."/>
            <person name="Sharp S."/>
            <person name="Simmonds M.N."/>
            <person name="Spiegler S."/>
            <person name="Tivey A."/>
            <person name="Sugano S."/>
            <person name="White B."/>
            <person name="Walker D."/>
            <person name="Woodward J.R."/>
            <person name="Winckler T."/>
            <person name="Tanaka Y."/>
            <person name="Shaulsky G."/>
            <person name="Schleicher M."/>
            <person name="Weinstock G.M."/>
            <person name="Rosenthal A."/>
            <person name="Cox E.C."/>
            <person name="Chisholm R.L."/>
            <person name="Gibbs R.A."/>
            <person name="Loomis W.F."/>
            <person name="Platzer M."/>
            <person name="Kay R.R."/>
            <person name="Williams J.G."/>
            <person name="Dear P.H."/>
            <person name="Noegel A.A."/>
            <person name="Barrell B.G."/>
            <person name="Kuspa A."/>
        </authorList>
    </citation>
    <scope>NUCLEOTIDE SEQUENCE [LARGE SCALE GENOMIC DNA]</scope>
    <source>
        <strain>AX4</strain>
    </source>
</reference>